<keyword id="KW-0004">4Fe-4S</keyword>
<keyword id="KW-0249">Electron transport</keyword>
<keyword id="KW-0408">Iron</keyword>
<keyword id="KW-0411">Iron-sulfur</keyword>
<keyword id="KW-0479">Metal-binding</keyword>
<keyword id="KW-0535">Nitrogen fixation</keyword>
<keyword id="KW-0614">Plasmid</keyword>
<keyword id="KW-1185">Reference proteome</keyword>
<keyword id="KW-0677">Repeat</keyword>
<keyword id="KW-0813">Transport</keyword>
<geneLocation type="plasmid">
    <name>sym pNGR234a</name>
</geneLocation>
<reference key="1">
    <citation type="journal article" date="1996" name="Genome Res.">
        <title>Sequencing the 500-kb GC-rich symbiotic replicon of Rhizobium sp. NGR234 using dye terminators and a thermostable 'sequenase': a beginning.</title>
        <authorList>
            <person name="Freiberg C."/>
            <person name="Perret X."/>
            <person name="Broughton W.J."/>
            <person name="Rosenthal A."/>
        </authorList>
    </citation>
    <scope>NUCLEOTIDE SEQUENCE [GENOMIC DNA]</scope>
</reference>
<reference key="2">
    <citation type="journal article" date="1997" name="Nature">
        <title>Molecular basis of symbiosis between Rhizobium and legumes.</title>
        <authorList>
            <person name="Freiberg C.A."/>
            <person name="Fellay R."/>
            <person name="Bairoch A."/>
            <person name="Broughton W.J."/>
            <person name="Rosenthal A."/>
            <person name="Perret X."/>
        </authorList>
    </citation>
    <scope>NUCLEOTIDE SEQUENCE [LARGE SCALE GENOMIC DNA]</scope>
    <source>
        <strain>NBRC 101917 / NGR234</strain>
    </source>
</reference>
<reference key="3">
    <citation type="journal article" date="2009" name="Appl. Environ. Microbiol.">
        <title>Rhizobium sp. strain NGR234 possesses a remarkable number of secretion systems.</title>
        <authorList>
            <person name="Schmeisser C."/>
            <person name="Liesegang H."/>
            <person name="Krysciak D."/>
            <person name="Bakkou N."/>
            <person name="Le Quere A."/>
            <person name="Wollherr A."/>
            <person name="Heinemeyer I."/>
            <person name="Morgenstern B."/>
            <person name="Pommerening-Roeser A."/>
            <person name="Flores M."/>
            <person name="Palacios R."/>
            <person name="Brenner S."/>
            <person name="Gottschalk G."/>
            <person name="Schmitz R.A."/>
            <person name="Broughton W.J."/>
            <person name="Perret X."/>
            <person name="Strittmatter A.W."/>
            <person name="Streit W.R."/>
        </authorList>
    </citation>
    <scope>NUCLEOTIDE SEQUENCE [LARGE SCALE GENOMIC DNA]</scope>
    <source>
        <strain>NBRC 101917 / NGR234</strain>
    </source>
</reference>
<organism>
    <name type="scientific">Sinorhizobium fredii (strain NBRC 101917 / NGR234)</name>
    <dbReference type="NCBI Taxonomy" id="394"/>
    <lineage>
        <taxon>Bacteria</taxon>
        <taxon>Pseudomonadati</taxon>
        <taxon>Pseudomonadota</taxon>
        <taxon>Alphaproteobacteria</taxon>
        <taxon>Hyphomicrobiales</taxon>
        <taxon>Rhizobiaceae</taxon>
        <taxon>Sinorhizobium/Ensifer group</taxon>
        <taxon>Sinorhizobium</taxon>
    </lineage>
</organism>
<accession>Q53204</accession>
<evidence type="ECO:0000250" key="1"/>
<evidence type="ECO:0000255" key="2">
    <source>
        <dbReference type="PROSITE-ProRule" id="PRU00711"/>
    </source>
</evidence>
<evidence type="ECO:0000305" key="3"/>
<proteinExistence type="predicted"/>
<sequence>MAFKIIASQCTQCGACEFECPSNAIELKGEKYVIDPKKCTECKGVFEIQQCASVCPMPKTCVPA</sequence>
<dbReference type="EMBL" id="Z68203">
    <property type="protein sequence ID" value="CAA92411.1"/>
    <property type="molecule type" value="Genomic_DNA"/>
</dbReference>
<dbReference type="EMBL" id="U00090">
    <property type="protein sequence ID" value="AAB91884.1"/>
    <property type="molecule type" value="Genomic_DNA"/>
</dbReference>
<dbReference type="RefSeq" id="NP_444097.1">
    <property type="nucleotide sequence ID" value="NC_000914.2"/>
</dbReference>
<dbReference type="RefSeq" id="WP_010875166.1">
    <property type="nucleotide sequence ID" value="NC_000914.2"/>
</dbReference>
<dbReference type="SMR" id="Q53204"/>
<dbReference type="KEGG" id="rhi:NGR_a01280"/>
<dbReference type="PATRIC" id="fig|394.7.peg.112"/>
<dbReference type="eggNOG" id="COG1145">
    <property type="taxonomic scope" value="Bacteria"/>
</dbReference>
<dbReference type="HOGENOM" id="CLU_139698_11_0_5"/>
<dbReference type="OrthoDB" id="9800445at2"/>
<dbReference type="Proteomes" id="UP000001054">
    <property type="component" value="Plasmid pNGR234a"/>
</dbReference>
<dbReference type="GO" id="GO:0051539">
    <property type="term" value="F:4 iron, 4 sulfur cluster binding"/>
    <property type="evidence" value="ECO:0007669"/>
    <property type="project" value="UniProtKB-KW"/>
</dbReference>
<dbReference type="GO" id="GO:0046872">
    <property type="term" value="F:metal ion binding"/>
    <property type="evidence" value="ECO:0007669"/>
    <property type="project" value="UniProtKB-KW"/>
</dbReference>
<dbReference type="GO" id="GO:0009399">
    <property type="term" value="P:nitrogen fixation"/>
    <property type="evidence" value="ECO:0007669"/>
    <property type="project" value="UniProtKB-KW"/>
</dbReference>
<dbReference type="FunFam" id="3.30.70.20:FF:000045">
    <property type="entry name" value="Ferredoxin, 4Fe-4S"/>
    <property type="match status" value="1"/>
</dbReference>
<dbReference type="Gene3D" id="3.30.70.20">
    <property type="match status" value="1"/>
</dbReference>
<dbReference type="InterPro" id="IPR017896">
    <property type="entry name" value="4Fe4S_Fe-S-bd"/>
</dbReference>
<dbReference type="InterPro" id="IPR017900">
    <property type="entry name" value="4Fe4S_Fe_S_CS"/>
</dbReference>
<dbReference type="Pfam" id="PF12838">
    <property type="entry name" value="Fer4_7"/>
    <property type="match status" value="1"/>
</dbReference>
<dbReference type="SUPFAM" id="SSF54862">
    <property type="entry name" value="4Fe-4S ferredoxins"/>
    <property type="match status" value="1"/>
</dbReference>
<dbReference type="PROSITE" id="PS00198">
    <property type="entry name" value="4FE4S_FER_1"/>
    <property type="match status" value="1"/>
</dbReference>
<dbReference type="PROSITE" id="PS51379">
    <property type="entry name" value="4FE4S_FER_2"/>
    <property type="match status" value="1"/>
</dbReference>
<name>FDXN_SINFN</name>
<protein>
    <recommendedName>
        <fullName>Ferredoxin-like protein in nif region</fullName>
    </recommendedName>
</protein>
<feature type="chain" id="PRO_0000159165" description="Ferredoxin-like protein in nif region">
    <location>
        <begin position="1"/>
        <end position="64"/>
    </location>
</feature>
<feature type="domain" description="4Fe-4S ferredoxin-type" evidence="2">
    <location>
        <begin position="2"/>
        <end position="30"/>
    </location>
</feature>
<feature type="binding site" evidence="1">
    <location>
        <position position="10"/>
    </location>
    <ligand>
        <name>[4Fe-4S] cluster</name>
        <dbReference type="ChEBI" id="CHEBI:49883"/>
        <label>1</label>
    </ligand>
</feature>
<feature type="binding site" evidence="1">
    <location>
        <position position="13"/>
    </location>
    <ligand>
        <name>[4Fe-4S] cluster</name>
        <dbReference type="ChEBI" id="CHEBI:49883"/>
        <label>1</label>
    </ligand>
</feature>
<feature type="binding site" evidence="1">
    <location>
        <position position="16"/>
    </location>
    <ligand>
        <name>[4Fe-4S] cluster</name>
        <dbReference type="ChEBI" id="CHEBI:49883"/>
        <label>1</label>
    </ligand>
</feature>
<feature type="binding site" evidence="1">
    <location>
        <position position="20"/>
    </location>
    <ligand>
        <name>[4Fe-4S] cluster</name>
        <dbReference type="ChEBI" id="CHEBI:49883"/>
        <label>2</label>
    </ligand>
</feature>
<feature type="binding site" evidence="1">
    <location>
        <position position="39"/>
    </location>
    <ligand>
        <name>[4Fe-4S] cluster</name>
        <dbReference type="ChEBI" id="CHEBI:49883"/>
        <label>2</label>
    </ligand>
</feature>
<feature type="binding site" evidence="1">
    <location>
        <position position="42"/>
    </location>
    <ligand>
        <name>[4Fe-4S] cluster</name>
        <dbReference type="ChEBI" id="CHEBI:49883"/>
        <label>2</label>
    </ligand>
</feature>
<feature type="binding site" evidence="1">
    <location>
        <position position="51"/>
    </location>
    <ligand>
        <name>[4Fe-4S] cluster</name>
        <dbReference type="ChEBI" id="CHEBI:49883"/>
        <label>2</label>
    </ligand>
</feature>
<feature type="binding site" evidence="1">
    <location>
        <position position="55"/>
    </location>
    <ligand>
        <name>[4Fe-4S] cluster</name>
        <dbReference type="ChEBI" id="CHEBI:49883"/>
        <label>1</label>
    </ligand>
</feature>
<gene>
    <name type="primary">fdxN</name>
    <name type="ordered locus">NGR_a01280</name>
    <name type="ORF">y4uL</name>
</gene>
<comment type="cofactor">
    <cofactor evidence="3">
        <name>[4Fe-4S] cluster</name>
        <dbReference type="ChEBI" id="CHEBI:49883"/>
    </cofactor>
    <text evidence="3">Binds 2 [4Fe-4S] clusters.</text>
</comment>